<comment type="similarity">
    <text evidence="3">In the N-terminal section; belongs to the ChdC family.</text>
</comment>
<evidence type="ECO:0000250" key="1"/>
<evidence type="ECO:0000256" key="2">
    <source>
        <dbReference type="SAM" id="MobiDB-lite"/>
    </source>
</evidence>
<evidence type="ECO:0000305" key="3"/>
<sequence length="531" mass="58675">MSEVPPTDEGWFVLHDFRTVDWDAWREAPTHRREAAVGDGVEYLRKHESIADAEEGSSAVFSVLGHKADILITHFRPTLDALSRAERQFEQTTFAGFTTQPTSYVSVAEISGYTTPGYFENPDAADEGLRQYMQGKLTPEIPNKDYAGFYPMSKRRGETYNWYDLPIDERAEMMEAHAETGKEYAGKIKQVIASSVGFDDYEWGVTLFADDPTDIKDIVYEMRFDEVSAKYGEFGTFYIGQRFPPADLGALLEGKAIPTVEQDVDAPTAHGEAHGHAHGDSPHGSGGGGGSSHGQSPGGASAGGSAHGTEDADHSDSRSTTSADTTQSDTSTNTNTQDSEIREQLAEYDIYAGQPHGEDVYATVLYSEATTDELFSEVEGLRGNFDHYGTHVKTAVYEARNRHRNAVVSIWETQSAAETAAGFISELPDVVSRAGEESGFGTMGMFYTVKSEYRGEFNDTFDTVGGILTEMDGHQQTDLMINLEDENDMFISSQWDAREDAMSFFRSDEFSETVEWGRDVLSERPRHVFLA</sequence>
<proteinExistence type="inferred from homology"/>
<organism>
    <name type="scientific">Haloquadratum walsbyi (strain DSM 16790 / HBSQ001)</name>
    <dbReference type="NCBI Taxonomy" id="362976"/>
    <lineage>
        <taxon>Archaea</taxon>
        <taxon>Methanobacteriati</taxon>
        <taxon>Methanobacteriota</taxon>
        <taxon>Stenosarchaea group</taxon>
        <taxon>Halobacteria</taxon>
        <taxon>Halobacteriales</taxon>
        <taxon>Haloferacaceae</taxon>
        <taxon>Haloquadratum</taxon>
    </lineage>
</organism>
<keyword id="KW-0349">Heme</keyword>
<keyword id="KW-0408">Iron</keyword>
<keyword id="KW-0479">Metal-binding</keyword>
<keyword id="KW-1185">Reference proteome</keyword>
<protein>
    <recommendedName>
        <fullName>Putative heme-binding protein HQ_1094A</fullName>
    </recommendedName>
</protein>
<name>Y1094_HALWD</name>
<accession>Q18DR5</accession>
<feature type="chain" id="PRO_0000294062" description="Putative heme-binding protein HQ_1094A">
    <location>
        <begin position="1"/>
        <end position="531"/>
    </location>
</feature>
<feature type="domain" description="ABM">
    <location>
        <begin position="441"/>
        <end position="529"/>
    </location>
</feature>
<feature type="region of interest" description="Disordered" evidence="2">
    <location>
        <begin position="269"/>
        <end position="340"/>
    </location>
</feature>
<feature type="compositionally biased region" description="Basic and acidic residues" evidence="2">
    <location>
        <begin position="271"/>
        <end position="281"/>
    </location>
</feature>
<feature type="compositionally biased region" description="Gly residues" evidence="2">
    <location>
        <begin position="284"/>
        <end position="306"/>
    </location>
</feature>
<feature type="compositionally biased region" description="Basic and acidic residues" evidence="2">
    <location>
        <begin position="308"/>
        <end position="317"/>
    </location>
</feature>
<feature type="compositionally biased region" description="Low complexity" evidence="2">
    <location>
        <begin position="318"/>
        <end position="338"/>
    </location>
</feature>
<feature type="binding site" description="axial binding residue" evidence="1">
    <location>
        <position position="177"/>
    </location>
    <ligand>
        <name>heme</name>
        <dbReference type="ChEBI" id="CHEBI:30413"/>
    </ligand>
    <ligandPart>
        <name>Fe</name>
        <dbReference type="ChEBI" id="CHEBI:18248"/>
    </ligandPart>
</feature>
<gene>
    <name type="ordered locus">HQ_1094A</name>
</gene>
<dbReference type="EMBL" id="AM180088">
    <property type="protein sequence ID" value="CAJ51224.1"/>
    <property type="molecule type" value="Genomic_DNA"/>
</dbReference>
<dbReference type="RefSeq" id="WP_011570390.1">
    <property type="nucleotide sequence ID" value="NC_008212.1"/>
</dbReference>
<dbReference type="SMR" id="Q18DR5"/>
<dbReference type="STRING" id="362976.HQ_1094A"/>
<dbReference type="GeneID" id="4192074"/>
<dbReference type="KEGG" id="hwa:HQ_1094A"/>
<dbReference type="eggNOG" id="arCOG03031">
    <property type="taxonomic scope" value="Archaea"/>
</dbReference>
<dbReference type="HOGENOM" id="CLU_470618_0_0_2"/>
<dbReference type="Proteomes" id="UP000001975">
    <property type="component" value="Chromosome"/>
</dbReference>
<dbReference type="GO" id="GO:0020037">
    <property type="term" value="F:heme binding"/>
    <property type="evidence" value="ECO:0007669"/>
    <property type="project" value="InterPro"/>
</dbReference>
<dbReference type="GO" id="GO:0046872">
    <property type="term" value="F:metal ion binding"/>
    <property type="evidence" value="ECO:0007669"/>
    <property type="project" value="UniProtKB-KW"/>
</dbReference>
<dbReference type="GO" id="GO:0016491">
    <property type="term" value="F:oxidoreductase activity"/>
    <property type="evidence" value="ECO:0007669"/>
    <property type="project" value="InterPro"/>
</dbReference>
<dbReference type="Gene3D" id="3.30.70.100">
    <property type="match status" value="1"/>
</dbReference>
<dbReference type="Gene3D" id="3.30.70.1030">
    <property type="entry name" value="Apc35880, domain 1"/>
    <property type="match status" value="2"/>
</dbReference>
<dbReference type="InterPro" id="IPR007138">
    <property type="entry name" value="ABM_dom"/>
</dbReference>
<dbReference type="InterPro" id="IPR010644">
    <property type="entry name" value="ChdC/CLD"/>
</dbReference>
<dbReference type="InterPro" id="IPR011008">
    <property type="entry name" value="Dimeric_a/b-barrel"/>
</dbReference>
<dbReference type="NCBIfam" id="NF007124">
    <property type="entry name" value="PRK09565.1"/>
    <property type="match status" value="2"/>
</dbReference>
<dbReference type="NCBIfam" id="NF008913">
    <property type="entry name" value="PRK12276.1"/>
    <property type="match status" value="1"/>
</dbReference>
<dbReference type="PANTHER" id="PTHR36843:SF1">
    <property type="entry name" value="COPROHEME DECARBOXYLASE"/>
    <property type="match status" value="1"/>
</dbReference>
<dbReference type="PANTHER" id="PTHR36843">
    <property type="entry name" value="HEME-DEPENDENT PEROXIDASE YWFI-RELATED"/>
    <property type="match status" value="1"/>
</dbReference>
<dbReference type="Pfam" id="PF03992">
    <property type="entry name" value="ABM"/>
    <property type="match status" value="1"/>
</dbReference>
<dbReference type="Pfam" id="PF06778">
    <property type="entry name" value="Chlor_dismutase"/>
    <property type="match status" value="1"/>
</dbReference>
<dbReference type="SUPFAM" id="SSF54909">
    <property type="entry name" value="Dimeric alpha+beta barrel"/>
    <property type="match status" value="2"/>
</dbReference>
<dbReference type="PROSITE" id="PS51725">
    <property type="entry name" value="ABM"/>
    <property type="match status" value="1"/>
</dbReference>
<reference key="1">
    <citation type="journal article" date="2006" name="BMC Genomics">
        <title>The genome of the square archaeon Haloquadratum walsbyi: life at the limits of water activity.</title>
        <authorList>
            <person name="Bolhuis H."/>
            <person name="Palm P."/>
            <person name="Wende A."/>
            <person name="Falb M."/>
            <person name="Rampp M."/>
            <person name="Rodriguez-Valera F."/>
            <person name="Pfeiffer F."/>
            <person name="Oesterhelt D."/>
        </authorList>
    </citation>
    <scope>NUCLEOTIDE SEQUENCE [LARGE SCALE GENOMIC DNA]</scope>
    <source>
        <strain>DSM 16790 / HBSQ001</strain>
    </source>
</reference>